<comment type="function">
    <text evidence="2 3">Histone demethylase that specifically demethylates 'Lys-4' of histone H3, thereby playing a central role in histone code. Does not demethylate histone H3 'Lys-9', H3 'Lys-27', H3 'Lys-36', H3 'Lys-79' or H4 'Lys-20'. Demethylates trimethylated and dimethylated but not monomethylated H3 'Lys-4'. Participates in transcriptional repression of neuronal genes by recruiting histone deacetylases and REST at neuron-restrictive silencer elements. Represses the CLOCK-BMAL1 heterodimer-mediated transcriptional activation of the core clock component PER2.</text>
</comment>
<comment type="catalytic activity">
    <reaction evidence="2">
        <text>N(6),N(6),N(6)-trimethyl-L-lysyl(4)-[histone H3] + 3 2-oxoglutarate + 3 O2 = L-lysyl(4)-[histone H3] + 3 formaldehyde + 3 succinate + 3 CO2</text>
        <dbReference type="Rhea" id="RHEA:60208"/>
        <dbReference type="Rhea" id="RHEA-COMP:15537"/>
        <dbReference type="Rhea" id="RHEA-COMP:15547"/>
        <dbReference type="ChEBI" id="CHEBI:15379"/>
        <dbReference type="ChEBI" id="CHEBI:16526"/>
        <dbReference type="ChEBI" id="CHEBI:16810"/>
        <dbReference type="ChEBI" id="CHEBI:16842"/>
        <dbReference type="ChEBI" id="CHEBI:29969"/>
        <dbReference type="ChEBI" id="CHEBI:30031"/>
        <dbReference type="ChEBI" id="CHEBI:61961"/>
        <dbReference type="EC" id="1.14.11.67"/>
    </reaction>
</comment>
<comment type="cofactor">
    <cofactor evidence="2">
        <name>Fe(2+)</name>
        <dbReference type="ChEBI" id="CHEBI:29033"/>
    </cofactor>
    <text evidence="2">Binds 1 Fe(2+) ion per subunit.</text>
</comment>
<comment type="subunit">
    <text evidence="2">Part of two distinct complexes, one containing E2F6, and the other containing REST. Interacts with ZMYND8.</text>
</comment>
<comment type="subcellular location">
    <subcellularLocation>
        <location evidence="1">Nucleus</location>
    </subcellularLocation>
</comment>
<comment type="similarity">
    <text evidence="5">Belongs to the JARID1 histone demethylase family.</text>
</comment>
<sequence length="180" mass="19964">QDWFHGRCVTVPRLLSSQRPGFTSSPLLAWWEWDTKFLCPLCMRSRRPRLETILALLVALQRLPVRLPEGEALQCLTERAISWQGRARQVLASEEVTALLGRLAELRQRLQAESKPEESLAYSSDAGEGAGHIPKVQGLLENGDSVTSPEKVATEEGSGKRDLELLSSLLPQLTGPVLEL</sequence>
<dbReference type="EC" id="1.14.11.67" evidence="2"/>
<dbReference type="EMBL" id="L29564">
    <property type="protein sequence ID" value="AAA62383.1"/>
    <property type="molecule type" value="mRNA"/>
</dbReference>
<dbReference type="PaxDb" id="10029-XP_007639140.1"/>
<dbReference type="eggNOG" id="KOG1246">
    <property type="taxonomic scope" value="Eukaryota"/>
</dbReference>
<dbReference type="Proteomes" id="UP000694386">
    <property type="component" value="Unplaced"/>
</dbReference>
<dbReference type="Proteomes" id="UP001108280">
    <property type="component" value="Unplaced"/>
</dbReference>
<dbReference type="GO" id="GO:0005634">
    <property type="term" value="C:nucleus"/>
    <property type="evidence" value="ECO:0007669"/>
    <property type="project" value="UniProtKB-SubCell"/>
</dbReference>
<dbReference type="GO" id="GO:0034647">
    <property type="term" value="F:histone H3K4me/H3K4me2/H3K4me3 demethylase activity"/>
    <property type="evidence" value="ECO:0007669"/>
    <property type="project" value="UniProtKB-EC"/>
</dbReference>
<dbReference type="GO" id="GO:0046872">
    <property type="term" value="F:metal ion binding"/>
    <property type="evidence" value="ECO:0007669"/>
    <property type="project" value="UniProtKB-KW"/>
</dbReference>
<dbReference type="GO" id="GO:0045892">
    <property type="term" value="P:negative regulation of DNA-templated transcription"/>
    <property type="evidence" value="ECO:0000250"/>
    <property type="project" value="UniProtKB"/>
</dbReference>
<dbReference type="GO" id="GO:0048511">
    <property type="term" value="P:rhythmic process"/>
    <property type="evidence" value="ECO:0007669"/>
    <property type="project" value="UniProtKB-KW"/>
</dbReference>
<dbReference type="FunFam" id="3.30.40.10:FF:000072">
    <property type="entry name" value="lysine-specific demethylase 5C isoform X2"/>
    <property type="match status" value="1"/>
</dbReference>
<dbReference type="Gene3D" id="3.30.40.10">
    <property type="entry name" value="Zinc/RING finger domain, C3HC4 (zinc finger)"/>
    <property type="match status" value="1"/>
</dbReference>
<dbReference type="InterPro" id="IPR013083">
    <property type="entry name" value="Znf_RING/FYVE/PHD"/>
</dbReference>
<organism>
    <name type="scientific">Cricetulus griseus</name>
    <name type="common">Chinese hamster</name>
    <name type="synonym">Cricetulus barabensis griseus</name>
    <dbReference type="NCBI Taxonomy" id="10029"/>
    <lineage>
        <taxon>Eukaryota</taxon>
        <taxon>Metazoa</taxon>
        <taxon>Chordata</taxon>
        <taxon>Craniata</taxon>
        <taxon>Vertebrata</taxon>
        <taxon>Euteleostomi</taxon>
        <taxon>Mammalia</taxon>
        <taxon>Eutheria</taxon>
        <taxon>Euarchontoglires</taxon>
        <taxon>Glires</taxon>
        <taxon>Rodentia</taxon>
        <taxon>Myomorpha</taxon>
        <taxon>Muroidea</taxon>
        <taxon>Cricetidae</taxon>
        <taxon>Cricetinae</taxon>
        <taxon>Cricetulus</taxon>
    </lineage>
</organism>
<keyword id="KW-0090">Biological rhythms</keyword>
<keyword id="KW-0156">Chromatin regulator</keyword>
<keyword id="KW-0223">Dioxygenase</keyword>
<keyword id="KW-0408">Iron</keyword>
<keyword id="KW-0479">Metal-binding</keyword>
<keyword id="KW-0539">Nucleus</keyword>
<keyword id="KW-0560">Oxidoreductase</keyword>
<keyword id="KW-0597">Phosphoprotein</keyword>
<keyword id="KW-0677">Repeat</keyword>
<keyword id="KW-0678">Repressor</keyword>
<keyword id="KW-0804">Transcription</keyword>
<keyword id="KW-0805">Transcription regulation</keyword>
<accession>P41228</accession>
<feature type="chain" id="PRO_0000200585" description="Lysine-specific demethylase 5C">
    <location>
        <begin position="1" status="less than"/>
        <end position="180" status="greater than"/>
    </location>
</feature>
<feature type="region of interest" description="Disordered" evidence="4">
    <location>
        <begin position="116"/>
        <end position="159"/>
    </location>
</feature>
<feature type="modified residue" description="Phosphoserine" evidence="2">
    <location>
        <position position="148"/>
    </location>
</feature>
<feature type="non-terminal residue">
    <location>
        <position position="1"/>
    </location>
</feature>
<feature type="non-terminal residue">
    <location>
        <position position="180"/>
    </location>
</feature>
<proteinExistence type="evidence at transcript level"/>
<protein>
    <recommendedName>
        <fullName>Lysine-specific demethylase 5C</fullName>
        <ecNumber evidence="2">1.14.11.67</ecNumber>
    </recommendedName>
    <alternativeName>
        <fullName>Histone demethylase JARID1C</fullName>
    </alternativeName>
    <alternativeName>
        <fullName>Jumonji/ARID domain-containing protein 1C</fullName>
    </alternativeName>
    <alternativeName>
        <fullName>Protein SmcX</fullName>
    </alternativeName>
    <alternativeName>
        <fullName>Protein Xe169</fullName>
    </alternativeName>
    <alternativeName>
        <fullName evidence="5">[histone H3]-trimethyl-L-lysine(4) demethylase 5C</fullName>
    </alternativeName>
</protein>
<gene>
    <name type="primary">KDM5C</name>
    <name type="synonym">JARID1C</name>
    <name type="synonym">SMCX</name>
    <name type="synonym">XE169</name>
</gene>
<reference key="1">
    <citation type="journal article" date="1994" name="Nat. Genet.">
        <title>The murine Xe169 gene escapes X-inactivation like its human homologue.</title>
        <authorList>
            <person name="Wu J."/>
            <person name="Salido E."/>
            <person name="Yen P."/>
            <person name="Mohandas T."/>
            <person name="Shapiro L.J."/>
        </authorList>
    </citation>
    <scope>NUCLEOTIDE SEQUENCE [MRNA]</scope>
</reference>
<name>KDM5C_CRIGR</name>
<evidence type="ECO:0000250" key="1"/>
<evidence type="ECO:0000250" key="2">
    <source>
        <dbReference type="UniProtKB" id="P41229"/>
    </source>
</evidence>
<evidence type="ECO:0000250" key="3">
    <source>
        <dbReference type="UniProtKB" id="P41230"/>
    </source>
</evidence>
<evidence type="ECO:0000256" key="4">
    <source>
        <dbReference type="SAM" id="MobiDB-lite"/>
    </source>
</evidence>
<evidence type="ECO:0000305" key="5"/>